<name>FUT3_HUMAN</name>
<reference key="1">
    <citation type="journal article" date="1990" name="Genes Dev.">
        <title>A cloned human cDNA determines expression of a mouse stage-specific embryonic antigen and the Lewis blood group alpha(1,3/1,4)fucosyltransferase.</title>
        <authorList>
            <person name="Kukowska-Latallo J.F."/>
            <person name="Larsen R.D."/>
            <person name="Nair R.P."/>
            <person name="Lowe J.B."/>
        </authorList>
    </citation>
    <scope>NUCLEOTIDE SEQUENCE [MRNA]</scope>
    <scope>VARIANTS TRP-68 AND THR-105</scope>
    <scope>CATALYTIC ACTIVITY</scope>
    <scope>FUNCTION</scope>
    <scope>TOPOLOGY</scope>
</reference>
<reference key="2">
    <citation type="journal article" date="1993" name="Biochem. Biophys. Res. Commun.">
        <title>Alpha (1,3/1,4)fucosyltransferase (FucT-III) gene is inactivated by a single amino acid substitution in Lewis histo-blood type negative individuals.</title>
        <authorList>
            <person name="Nishihara S."/>
            <person name="Yazawa S."/>
            <person name="Iwasaki H."/>
            <person name="Nakazato M."/>
            <person name="Kudo T."/>
            <person name="Ando T."/>
            <person name="Narimatsu H."/>
        </authorList>
    </citation>
    <scope>NUCLEOTIDE SEQUENCE [GENOMIC DNA]</scope>
    <scope>VARIANTS LE(-) ARG-20; SER-170 AND ALA-336</scope>
    <scope>VARIANTS TRP-68 AND THR-105</scope>
</reference>
<reference key="3">
    <citation type="journal article" date="1995" name="J. Biol. Chem.">
        <title>Expression of human chromosome 19p alpha(1,3)-fucosyltransferase genes in normal tissues. Alternative splicing, polyadenylation, and isoforms.</title>
        <authorList>
            <person name="Cameron H.S."/>
            <person name="Szczepaniak D."/>
            <person name="Weston B.W."/>
        </authorList>
    </citation>
    <scope>NUCLEOTIDE SEQUENCE [MRNA]</scope>
    <scope>VARIANTS TRP-68 AND THR-105</scope>
    <scope>TISSUE SPECIFICITY</scope>
    <source>
        <tissue>Liver</tissue>
    </source>
</reference>
<reference key="4">
    <citation type="submission" date="1999-02" db="EMBL/GenBank/DDBJ databases">
        <title>Isolation and expression of human alpha (1,3/1,4) fucosyltransferase.</title>
        <authorList>
            <person name="Rahim I."/>
            <person name="Schmidt L.R."/>
            <person name="Wahl D."/>
            <person name="Drayson E."/>
            <person name="Maslanik W."/>
            <person name="Stranahan P.L."/>
            <person name="Pettijohn D.E."/>
        </authorList>
    </citation>
    <scope>NUCLEOTIDE SEQUENCE [MRNA]</scope>
    <scope>VARIANTS TRP-68 AND THR-105</scope>
    <source>
        <tissue>Squamous cell carcinoma</tissue>
    </source>
</reference>
<reference key="5">
    <citation type="submission" date="2008-09" db="EMBL/GenBank/DDBJ databases">
        <title>Allele frequencies of fucosyltransferases 1, 2, and 3 of Styrian blood donors.</title>
        <authorList>
            <person name="Matzhold E.M."/>
        </authorList>
    </citation>
    <scope>NUCLEOTIDE SEQUENCE [GENOMIC DNA]</scope>
    <scope>VARIANT THR-105</scope>
    <source>
        <tissue>Blood</tissue>
    </source>
</reference>
<reference key="6">
    <citation type="submission" date="2004-12" db="EMBL/GenBank/DDBJ databases">
        <authorList>
            <consortium name="SeattleSNPs variation discovery resource"/>
        </authorList>
    </citation>
    <scope>NUCLEOTIDE SEQUENCE [GENOMIC DNA]</scope>
    <scope>VARIANTS LE(-) ARG-20; ASN-162; SER-170; ARG-223 AND MET-270</scope>
    <scope>VARIANTS SER-5; CYS-160; MET-325 AND GLN-327</scope>
    <scope>VARIANTS TRP-68 AND THR-105</scope>
</reference>
<reference key="7">
    <citation type="journal article" date="2004" name="Nature">
        <title>The DNA sequence and biology of human chromosome 19.</title>
        <authorList>
            <person name="Grimwood J."/>
            <person name="Gordon L.A."/>
            <person name="Olsen A.S."/>
            <person name="Terry A."/>
            <person name="Schmutz J."/>
            <person name="Lamerdin J.E."/>
            <person name="Hellsten U."/>
            <person name="Goodstein D."/>
            <person name="Couronne O."/>
            <person name="Tran-Gyamfi M."/>
            <person name="Aerts A."/>
            <person name="Altherr M."/>
            <person name="Ashworth L."/>
            <person name="Bajorek E."/>
            <person name="Black S."/>
            <person name="Branscomb E."/>
            <person name="Caenepeel S."/>
            <person name="Carrano A.V."/>
            <person name="Caoile C."/>
            <person name="Chan Y.M."/>
            <person name="Christensen M."/>
            <person name="Cleland C.A."/>
            <person name="Copeland A."/>
            <person name="Dalin E."/>
            <person name="Dehal P."/>
            <person name="Denys M."/>
            <person name="Detter J.C."/>
            <person name="Escobar J."/>
            <person name="Flowers D."/>
            <person name="Fotopulos D."/>
            <person name="Garcia C."/>
            <person name="Georgescu A.M."/>
            <person name="Glavina T."/>
            <person name="Gomez M."/>
            <person name="Gonzales E."/>
            <person name="Groza M."/>
            <person name="Hammon N."/>
            <person name="Hawkins T."/>
            <person name="Haydu L."/>
            <person name="Ho I."/>
            <person name="Huang W."/>
            <person name="Israni S."/>
            <person name="Jett J."/>
            <person name="Kadner K."/>
            <person name="Kimball H."/>
            <person name="Kobayashi A."/>
            <person name="Larionov V."/>
            <person name="Leem S.-H."/>
            <person name="Lopez F."/>
            <person name="Lou Y."/>
            <person name="Lowry S."/>
            <person name="Malfatti S."/>
            <person name="Martinez D."/>
            <person name="McCready P.M."/>
            <person name="Medina C."/>
            <person name="Morgan J."/>
            <person name="Nelson K."/>
            <person name="Nolan M."/>
            <person name="Ovcharenko I."/>
            <person name="Pitluck S."/>
            <person name="Pollard M."/>
            <person name="Popkie A.P."/>
            <person name="Predki P."/>
            <person name="Quan G."/>
            <person name="Ramirez L."/>
            <person name="Rash S."/>
            <person name="Retterer J."/>
            <person name="Rodriguez A."/>
            <person name="Rogers S."/>
            <person name="Salamov A."/>
            <person name="Salazar A."/>
            <person name="She X."/>
            <person name="Smith D."/>
            <person name="Slezak T."/>
            <person name="Solovyev V."/>
            <person name="Thayer N."/>
            <person name="Tice H."/>
            <person name="Tsai M."/>
            <person name="Ustaszewska A."/>
            <person name="Vo N."/>
            <person name="Wagner M."/>
            <person name="Wheeler J."/>
            <person name="Wu K."/>
            <person name="Xie G."/>
            <person name="Yang J."/>
            <person name="Dubchak I."/>
            <person name="Furey T.S."/>
            <person name="DeJong P."/>
            <person name="Dickson M."/>
            <person name="Gordon D."/>
            <person name="Eichler E.E."/>
            <person name="Pennacchio L.A."/>
            <person name="Richardson P."/>
            <person name="Stubbs L."/>
            <person name="Rokhsar D.S."/>
            <person name="Myers R.M."/>
            <person name="Rubin E.M."/>
            <person name="Lucas S.M."/>
        </authorList>
    </citation>
    <scope>NUCLEOTIDE SEQUENCE [LARGE SCALE GENOMIC DNA]</scope>
</reference>
<reference key="8">
    <citation type="journal article" date="2004" name="Genome Res.">
        <title>The status, quality, and expansion of the NIH full-length cDNA project: the Mammalian Gene Collection (MGC).</title>
        <authorList>
            <consortium name="The MGC Project Team"/>
        </authorList>
    </citation>
    <scope>NUCLEOTIDE SEQUENCE [LARGE SCALE MRNA]</scope>
    <scope>VARIANTS TRP-68 AND THR-105</scope>
    <source>
        <tissue>Colon</tissue>
        <tissue>Lung</tissue>
    </source>
</reference>
<reference key="9">
    <citation type="journal article" date="1995" name="J. Biol. Chem.">
        <title>Acceptor specificity of different length constructs of human recombinant alpha 1,3/4-fucosyltransferases. Replacement of the stem region and the transmembrane domain of fucosyltransferase V by protein A results in an enzyme with GDP-fucose hydrolyzing activity.</title>
        <authorList>
            <person name="de Vries T."/>
            <person name="Srnka C.A."/>
            <person name="Palcic M.M."/>
            <person name="Swiedler S.J."/>
            <person name="van den Eijnden D.H."/>
            <person name="Macher B.A."/>
        </authorList>
    </citation>
    <scope>CATALYTIC ACTIVITY</scope>
    <scope>FUNCTION</scope>
    <scope>BIOPHYSICOCHEMICAL PROPERTIES</scope>
    <scope>GLYCOSYLATION</scope>
</reference>
<reference key="10">
    <citation type="journal article" date="2000" name="Int. J. Cancer">
        <title>Peritoneal colonization by human pancreatic cancer cells is inhibited by antisense FUT3 sequence.</title>
        <authorList>
            <person name="Aubert M."/>
            <person name="Panicot-Dubois L."/>
            <person name="Crotte C."/>
            <person name="Sbarra V."/>
            <person name="Lombardo D."/>
            <person name="Sadoulet M.O."/>
            <person name="Mas E."/>
        </authorList>
    </citation>
    <scope>FUNCTION</scope>
    <scope>CATALYTIC ACTIVITY</scope>
</reference>
<reference key="11">
    <citation type="journal article" date="2003" name="J. Biol. Chem.">
        <title>Synthesis of disialyl Lewis a (Le(a)) structure in colon cancer cell lines by a sialyltransferase, ST6GalNAc VI, responsible for the synthesis of alpha-series gangliosides.</title>
        <authorList>
            <person name="Tsuchida A."/>
            <person name="Okajima T."/>
            <person name="Furukawa K."/>
            <person name="Ando T."/>
            <person name="Ishida H."/>
            <person name="Yoshida A."/>
            <person name="Nakamura Y."/>
            <person name="Kannagi R."/>
            <person name="Kiso M."/>
            <person name="Furukawa K."/>
        </authorList>
    </citation>
    <scope>CATALYTIC ACTIVITY</scope>
    <scope>FUNCTION</scope>
</reference>
<reference key="12">
    <citation type="journal article" date="2016" name="Cell. Mol. Biol.">
        <title>Effect of FUT3 gene silencing with miRNA on proliferation, invasion and migration abilities of human KATO-III gastric cancer cell line.</title>
        <authorList>
            <person name="Cai Y.J."/>
            <person name="Zheng X.F."/>
            <person name="Lu C.H."/>
            <person name="Jiang Q."/>
            <person name="Liu Q."/>
            <person name="Xin Y.H."/>
        </authorList>
    </citation>
    <scope>FUNCTION</scope>
</reference>
<reference key="13">
    <citation type="journal article" date="2018" name="J. Biol. Chem.">
        <title>Distinct human alpha(1,3)-fucosyltransferases drive Lewis-X/sialyl Lewis-X assembly in human cells.</title>
        <authorList>
            <person name="Mondal N."/>
            <person name="Dykstra B."/>
            <person name="Lee J."/>
            <person name="Ashline D.J."/>
            <person name="Reinhold V.N."/>
            <person name="Rossi D.J."/>
            <person name="Sackstein R."/>
        </authorList>
    </citation>
    <scope>FUNCTION</scope>
    <scope>CATALYTIC ACTIVITY</scope>
    <scope>PATHWAY</scope>
</reference>
<reference key="14">
    <citation type="journal article" date="1993" name="Biochem. Biophys. Res. Commun.">
        <title>Genotypic heterogeneity among Lewis negative individuals.</title>
        <authorList>
            <person name="Elmgren A."/>
            <person name="Rydberg L."/>
            <person name="Larson G."/>
        </authorList>
    </citation>
    <scope>VARIANT LE(-) MET-105</scope>
</reference>
<reference key="15">
    <citation type="journal article" date="1993" name="Blood">
        <title>Analysis of Lewis fucosyltransferase genes from the human gastric mucosa of Lewis-positive and -negative individuals.</title>
        <authorList>
            <person name="Koda Y."/>
            <person name="Kimura H."/>
            <person name="Mekada E."/>
        </authorList>
    </citation>
    <scope>VARIANTS LE(-) ARG-20 AND SER-170</scope>
</reference>
<reference key="16">
    <citation type="journal article" date="1994" name="J. Biol. Chem.">
        <title>Molecular basis for Lewis alpha(1,3/1,4)-fucosyltransferase gene deficiency (FUT3) found in Lewis-negative Indonesian pedigrees.</title>
        <authorList>
            <person name="Mollicone R."/>
            <person name="Reguigne I."/>
            <person name="Kelly R.J."/>
            <person name="Fletcher A."/>
            <person name="Watt J."/>
            <person name="Chatfield S."/>
            <person name="Aziz A."/>
            <person name="Cameron H.S."/>
            <person name="Weston B.W."/>
            <person name="Lowe J.B."/>
            <person name="Oriol R."/>
        </authorList>
    </citation>
    <scope>VARIANTS LE(-) ARG-20 AND LYS-356</scope>
</reference>
<reference key="17">
    <citation type="journal article" date="1994" name="J. Biol. Chem.">
        <title>Molecular genetic analysis of the human Lewis histo-blood group system.</title>
        <authorList>
            <person name="Nishihara S."/>
            <person name="Narimatsu H."/>
            <person name="Iwasaki H."/>
            <person name="Yazawa S."/>
            <person name="Akamatsu S."/>
            <person name="Ando T."/>
            <person name="Seno T."/>
            <person name="Narimatsu I."/>
        </authorList>
    </citation>
    <scope>VARIANT LE(-) LYS-356</scope>
</reference>
<reference key="18">
    <citation type="journal article" date="1996" name="Vox Sang.">
        <title>DNA sequencing and screening for point mutations in the human Lewis 'FUT3' gene enables molecular genotyping of the human Lewis blood group system.</title>
        <authorList>
            <person name="Elmgren A."/>
            <person name="Boerjeson C."/>
            <person name="Svensson L."/>
            <person name="Rydberg L."/>
            <person name="Larson G."/>
        </authorList>
    </citation>
    <scope>VARIANTS LE(-) ARG-20; ARG-68; MET-105 AND LYS-356</scope>
</reference>
<reference key="19">
    <citation type="journal article" date="1997" name="J. Biol. Chem.">
        <title>Significance of individual point mutations, T202C and C314T, in the human Lewis 'FUT3' gene for expression of Lewis antigens by the human alpha'1,3/1,4'-fucosyltransferase, Fuc-TIII.</title>
        <authorList>
            <person name="Elmgren A."/>
            <person name="Mollicone R."/>
            <person name="Costache M."/>
            <person name="Boerjeson C."/>
            <person name="Oriol R."/>
            <person name="Harrington J."/>
            <person name="Larson G."/>
        </authorList>
    </citation>
    <scope>VARIANTS LE(-) ARG-68 AND MET-105</scope>
</reference>
<reference key="20">
    <citation type="journal article" date="1998" name="Glycoconj. J.">
        <title>Significance of each of three missense mutations, G484A, G667A, and G808A, present in an inactive allele of the human Lewis gene (FUT3) for alpha(1,3/1,4)fucosyltransferase inactivation.</title>
        <authorList>
            <person name="Pang H."/>
            <person name="Koda Y."/>
            <person name="Soejima M."/>
            <person name="Kimura H."/>
        </authorList>
    </citation>
    <scope>VARIANTS LE(-) ASN-162; ARG-223 AND MET-270</scope>
    <scope>CHARACTERIZATION OF VARIANTS LE(-) ASN-162; ARG-223 AND MET-270</scope>
</reference>
<reference key="21">
    <citation type="journal article" date="1998" name="Hum. Genet.">
        <title>Five novel missense mutations of the Lewis gene 'FUT3' in African 'Xhosa' and Caucasian populations in South Africa.</title>
        <authorList>
            <person name="Pang H."/>
            <person name="Liu Y."/>
            <person name="Koda Y."/>
            <person name="Soejima M."/>
            <person name="Jia J."/>
            <person name="Schlaphoff T."/>
            <person name="du Toit E.D."/>
            <person name="Kimura H."/>
        </authorList>
    </citation>
    <scope>VARIANTS LE(+) LYS-102 AND ALA-124</scope>
    <scope>VARIANTS LE(-) ASN-162; ARG-223 AND MET-270</scope>
</reference>
<accession>P21217</accession>
<accession>B5U7U9</accession>
<accession>B5U7V0</accession>
<accession>Q32NE7</accession>
<accession>Q99448</accession>
<accession>Q99449</accession>
<dbReference type="EC" id="2.4.1.65" evidence="7 11"/>
<dbReference type="EC" id="2.4.1.152" evidence="9"/>
<dbReference type="EC" id="2.4.1.-" evidence="7"/>
<dbReference type="EMBL" id="X53578">
    <property type="protein sequence ID" value="CAA37641.1"/>
    <property type="molecule type" value="mRNA"/>
</dbReference>
<dbReference type="EMBL" id="U27326">
    <property type="protein sequence ID" value="AAC50185.1"/>
    <property type="molecule type" value="mRNA"/>
</dbReference>
<dbReference type="EMBL" id="U27327">
    <property type="protein sequence ID" value="AAC50186.1"/>
    <property type="molecule type" value="mRNA"/>
</dbReference>
<dbReference type="EMBL" id="U27328">
    <property type="protein sequence ID" value="AAC50187.1"/>
    <property type="molecule type" value="mRNA"/>
</dbReference>
<dbReference type="EMBL" id="D89324">
    <property type="protein sequence ID" value="BAA13941.1"/>
    <property type="molecule type" value="Genomic_DNA"/>
</dbReference>
<dbReference type="EMBL" id="D89325">
    <property type="protein sequence ID" value="BAA13942.1"/>
    <property type="molecule type" value="Genomic_DNA"/>
</dbReference>
<dbReference type="EMBL" id="AF131913">
    <property type="protein sequence ID" value="AAD33514.1"/>
    <property type="molecule type" value="mRNA"/>
</dbReference>
<dbReference type="EMBL" id="FM210024">
    <property type="protein sequence ID" value="CAR64692.1"/>
    <property type="molecule type" value="Genomic_DNA"/>
</dbReference>
<dbReference type="EMBL" id="FM210025">
    <property type="protein sequence ID" value="CAR64693.1"/>
    <property type="molecule type" value="Genomic_DNA"/>
</dbReference>
<dbReference type="EMBL" id="AY870341">
    <property type="protein sequence ID" value="AAW34365.1"/>
    <property type="molecule type" value="Genomic_DNA"/>
</dbReference>
<dbReference type="EMBL" id="AC024592">
    <property type="status" value="NOT_ANNOTATED_CDS"/>
    <property type="molecule type" value="Genomic_DNA"/>
</dbReference>
<dbReference type="EMBL" id="BC074836">
    <property type="protein sequence ID" value="AAH74836.1"/>
    <property type="molecule type" value="mRNA"/>
</dbReference>
<dbReference type="EMBL" id="BC074837">
    <property type="protein sequence ID" value="AAH74837.1"/>
    <property type="molecule type" value="mRNA"/>
</dbReference>
<dbReference type="EMBL" id="BC108675">
    <property type="protein sequence ID" value="AAI08676.1"/>
    <property type="molecule type" value="mRNA"/>
</dbReference>
<dbReference type="CCDS" id="CCDS12153.1"/>
<dbReference type="PIR" id="A36669">
    <property type="entry name" value="A36669"/>
</dbReference>
<dbReference type="RefSeq" id="NP_000140.1">
    <property type="nucleotide sequence ID" value="NM_000149.3"/>
</dbReference>
<dbReference type="RefSeq" id="NP_001091108.1">
    <property type="nucleotide sequence ID" value="NM_001097639.1"/>
</dbReference>
<dbReference type="RefSeq" id="NP_001091109.1">
    <property type="nucleotide sequence ID" value="NM_001097640.1"/>
</dbReference>
<dbReference type="RefSeq" id="NP_001091110.1">
    <property type="nucleotide sequence ID" value="NM_001097641.1"/>
</dbReference>
<dbReference type="RefSeq" id="XP_011526167.1">
    <property type="nucleotide sequence ID" value="XM_011527865.1"/>
</dbReference>
<dbReference type="RefSeq" id="XP_011526168.1">
    <property type="nucleotide sequence ID" value="XM_011527866.1"/>
</dbReference>
<dbReference type="RefSeq" id="XP_011526169.1">
    <property type="nucleotide sequence ID" value="XM_011527867.1"/>
</dbReference>
<dbReference type="SMR" id="P21217"/>
<dbReference type="BioGRID" id="108801">
    <property type="interactions" value="97"/>
</dbReference>
<dbReference type="FunCoup" id="P21217">
    <property type="interactions" value="180"/>
</dbReference>
<dbReference type="IntAct" id="P21217">
    <property type="interactions" value="26"/>
</dbReference>
<dbReference type="STRING" id="9606.ENSP00000305603"/>
<dbReference type="ChEMBL" id="CHEMBL3269"/>
<dbReference type="SwissLipids" id="SLP:000001370"/>
<dbReference type="CAZy" id="GT10">
    <property type="family name" value="Glycosyltransferase Family 10"/>
</dbReference>
<dbReference type="GlyCosmos" id="P21217">
    <property type="glycosylation" value="2 sites, No reported glycans"/>
</dbReference>
<dbReference type="GlyGen" id="P21217">
    <property type="glycosylation" value="6 sites"/>
</dbReference>
<dbReference type="iPTMnet" id="P21217"/>
<dbReference type="PhosphoSitePlus" id="P21217"/>
<dbReference type="BioMuta" id="FUT3"/>
<dbReference type="DMDM" id="121137"/>
<dbReference type="jPOST" id="P21217"/>
<dbReference type="MassIVE" id="P21217"/>
<dbReference type="PaxDb" id="9606-ENSP00000305603"/>
<dbReference type="PeptideAtlas" id="P21217"/>
<dbReference type="PRIDE" id="P21217"/>
<dbReference type="ProteomicsDB" id="53853"/>
<dbReference type="Pumba" id="P21217"/>
<dbReference type="Antibodypedia" id="11767">
    <property type="antibodies" value="528 antibodies from 37 providers"/>
</dbReference>
<dbReference type="DNASU" id="2525"/>
<dbReference type="Ensembl" id="ENST00000303225.12">
    <property type="protein sequence ID" value="ENSP00000305603.5"/>
    <property type="gene ID" value="ENSG00000171124.14"/>
</dbReference>
<dbReference type="Ensembl" id="ENST00000458379.7">
    <property type="protein sequence ID" value="ENSP00000416443.1"/>
    <property type="gene ID" value="ENSG00000171124.14"/>
</dbReference>
<dbReference type="Ensembl" id="ENST00000589620.6">
    <property type="protein sequence ID" value="ENSP00000465804.1"/>
    <property type="gene ID" value="ENSG00000171124.14"/>
</dbReference>
<dbReference type="Ensembl" id="ENST00000589918.5">
    <property type="protein sequence ID" value="ENSP00000468123.1"/>
    <property type="gene ID" value="ENSG00000171124.14"/>
</dbReference>
<dbReference type="Ensembl" id="ENST00000709634.1">
    <property type="protein sequence ID" value="ENSP00000517811.1"/>
    <property type="gene ID" value="ENSG00000292063.1"/>
</dbReference>
<dbReference type="Ensembl" id="ENST00000709635.1">
    <property type="protein sequence ID" value="ENSP00000517812.1"/>
    <property type="gene ID" value="ENSG00000292063.1"/>
</dbReference>
<dbReference type="Ensembl" id="ENST00000709636.1">
    <property type="protein sequence ID" value="ENSP00000517813.1"/>
    <property type="gene ID" value="ENSG00000292063.1"/>
</dbReference>
<dbReference type="Ensembl" id="ENST00000709637.1">
    <property type="protein sequence ID" value="ENSP00000517814.1"/>
    <property type="gene ID" value="ENSG00000292063.1"/>
</dbReference>
<dbReference type="GeneID" id="2525"/>
<dbReference type="KEGG" id="hsa:2525"/>
<dbReference type="MANE-Select" id="ENST00000709635.1">
    <property type="protein sequence ID" value="ENSP00000517812.1"/>
    <property type="RefSeq nucleotide sequence ID" value="NM_001097639.3"/>
    <property type="RefSeq protein sequence ID" value="NP_001091108.3"/>
</dbReference>
<dbReference type="UCSC" id="uc002mdj.3">
    <property type="organism name" value="human"/>
</dbReference>
<dbReference type="AGR" id="HGNC:4014"/>
<dbReference type="CTD" id="2525"/>
<dbReference type="DisGeNET" id="2525"/>
<dbReference type="GeneCards" id="FUT3"/>
<dbReference type="HGNC" id="HGNC:4014">
    <property type="gene designation" value="FUT3"/>
</dbReference>
<dbReference type="HPA" id="ENSG00000171124">
    <property type="expression patterns" value="Tissue enhanced (esophagus, intestine, retina, salivary gland)"/>
</dbReference>
<dbReference type="MalaCards" id="FUT3"/>
<dbReference type="MIM" id="111100">
    <property type="type" value="gene"/>
</dbReference>
<dbReference type="MIM" id="618983">
    <property type="type" value="phenotype"/>
</dbReference>
<dbReference type="neXtProt" id="NX_P21217"/>
<dbReference type="OpenTargets" id="ENSG00000171124"/>
<dbReference type="PharmGKB" id="PA28430"/>
<dbReference type="VEuPathDB" id="HostDB:ENSG00000171124"/>
<dbReference type="eggNOG" id="KOG2619">
    <property type="taxonomic scope" value="Eukaryota"/>
</dbReference>
<dbReference type="GeneTree" id="ENSGT00940000163389"/>
<dbReference type="HOGENOM" id="CLU_032075_4_1_1"/>
<dbReference type="InParanoid" id="P21217"/>
<dbReference type="OMA" id="PQWPWRH"/>
<dbReference type="OrthoDB" id="427096at2759"/>
<dbReference type="PAN-GO" id="P21217">
    <property type="GO annotations" value="2 GO annotations based on evolutionary models"/>
</dbReference>
<dbReference type="PhylomeDB" id="P21217"/>
<dbReference type="TreeFam" id="TF316348"/>
<dbReference type="BioCyc" id="MetaCyc:HS10249-MONOMER"/>
<dbReference type="BRENDA" id="2.4.1.65">
    <property type="organism ID" value="2681"/>
</dbReference>
<dbReference type="PathwayCommons" id="P21217"/>
<dbReference type="Reactome" id="R-HSA-9037629">
    <property type="pathway name" value="Lewis blood group biosynthesis"/>
</dbReference>
<dbReference type="Reactome" id="R-HSA-975578">
    <property type="pathway name" value="Reactions specific to the complex N-glycan synthesis pathway"/>
</dbReference>
<dbReference type="SignaLink" id="P21217"/>
<dbReference type="SIGNOR" id="P21217"/>
<dbReference type="UniPathway" id="UPA00378"/>
<dbReference type="BioGRID-ORCS" id="2525">
    <property type="hits" value="6 hits in 1139 CRISPR screens"/>
</dbReference>
<dbReference type="ChiTaRS" id="FUT3">
    <property type="organism name" value="human"/>
</dbReference>
<dbReference type="GeneWiki" id="Fucosyltransferase_3"/>
<dbReference type="GenomeRNAi" id="2525"/>
<dbReference type="Pharos" id="P21217">
    <property type="development level" value="Tbio"/>
</dbReference>
<dbReference type="PRO" id="PR:P21217"/>
<dbReference type="Proteomes" id="UP000005640">
    <property type="component" value="Chromosome 19"/>
</dbReference>
<dbReference type="RNAct" id="P21217">
    <property type="molecule type" value="protein"/>
</dbReference>
<dbReference type="Bgee" id="ENSG00000171124">
    <property type="expression patterns" value="Expressed in lower esophagus mucosa and 149 other cell types or tissues"/>
</dbReference>
<dbReference type="ExpressionAtlas" id="P21217">
    <property type="expression patterns" value="baseline and differential"/>
</dbReference>
<dbReference type="GO" id="GO:0070062">
    <property type="term" value="C:extracellular exosome"/>
    <property type="evidence" value="ECO:0007005"/>
    <property type="project" value="UniProtKB"/>
</dbReference>
<dbReference type="GO" id="GO:0032580">
    <property type="term" value="C:Golgi cisterna membrane"/>
    <property type="evidence" value="ECO:0007669"/>
    <property type="project" value="UniProtKB-SubCell"/>
</dbReference>
<dbReference type="GO" id="GO:0000139">
    <property type="term" value="C:Golgi membrane"/>
    <property type="evidence" value="ECO:0000304"/>
    <property type="project" value="Reactome"/>
</dbReference>
<dbReference type="GO" id="GO:0016020">
    <property type="term" value="C:membrane"/>
    <property type="evidence" value="ECO:0000314"/>
    <property type="project" value="BHF-UCL"/>
</dbReference>
<dbReference type="GO" id="GO:0017060">
    <property type="term" value="F:3-galactosyl-N-acetylglucosaminide 4-alpha-L-fucosyltransferase activity"/>
    <property type="evidence" value="ECO:0000314"/>
    <property type="project" value="UniProtKB"/>
</dbReference>
<dbReference type="GO" id="GO:0017083">
    <property type="term" value="F:4-galactosyl-N-acetylglucosaminide 3-alpha-L-fucosyltransferase activity"/>
    <property type="evidence" value="ECO:0000314"/>
    <property type="project" value="UniProtKB"/>
</dbReference>
<dbReference type="GO" id="GO:0046920">
    <property type="term" value="F:alpha-(1-&gt;3)-fucosyltransferase activity"/>
    <property type="evidence" value="ECO:0000314"/>
    <property type="project" value="BHF-UCL"/>
</dbReference>
<dbReference type="GO" id="GO:0008417">
    <property type="term" value="F:fucosyltransferase activity"/>
    <property type="evidence" value="ECO:0000314"/>
    <property type="project" value="BHF-UCL"/>
</dbReference>
<dbReference type="GO" id="GO:0009988">
    <property type="term" value="P:cell-cell recognition"/>
    <property type="evidence" value="ECO:0000305"/>
    <property type="project" value="BHF-UCL"/>
</dbReference>
<dbReference type="GO" id="GO:0006672">
    <property type="term" value="P:ceramide metabolic process"/>
    <property type="evidence" value="ECO:0000314"/>
    <property type="project" value="BHF-UCL"/>
</dbReference>
<dbReference type="GO" id="GO:0036065">
    <property type="term" value="P:fucosylation"/>
    <property type="evidence" value="ECO:0000314"/>
    <property type="project" value="UniProtKB"/>
</dbReference>
<dbReference type="GO" id="GO:0043413">
    <property type="term" value="P:macromolecule glycosylation"/>
    <property type="evidence" value="ECO:0000314"/>
    <property type="project" value="BHF-UCL"/>
</dbReference>
<dbReference type="GO" id="GO:0009312">
    <property type="term" value="P:oligosaccharide biosynthetic process"/>
    <property type="evidence" value="ECO:0000314"/>
    <property type="project" value="BHF-UCL"/>
</dbReference>
<dbReference type="GO" id="GO:0009311">
    <property type="term" value="P:oligosaccharide metabolic process"/>
    <property type="evidence" value="ECO:0000314"/>
    <property type="project" value="UniProtKB"/>
</dbReference>
<dbReference type="GO" id="GO:0022409">
    <property type="term" value="P:positive regulation of cell-cell adhesion"/>
    <property type="evidence" value="ECO:0000315"/>
    <property type="project" value="UniProtKB"/>
</dbReference>
<dbReference type="GO" id="GO:0006487">
    <property type="term" value="P:protein N-linked glycosylation"/>
    <property type="evidence" value="ECO:0000314"/>
    <property type="project" value="UniProtKB"/>
</dbReference>
<dbReference type="GO" id="GO:0006493">
    <property type="term" value="P:protein O-linked glycosylation"/>
    <property type="evidence" value="ECO:0000314"/>
    <property type="project" value="UniProtKB"/>
</dbReference>
<dbReference type="GO" id="GO:0030334">
    <property type="term" value="P:regulation of cell migration"/>
    <property type="evidence" value="ECO:0000315"/>
    <property type="project" value="UniProtKB"/>
</dbReference>
<dbReference type="GO" id="GO:0042127">
    <property type="term" value="P:regulation of cell population proliferation"/>
    <property type="evidence" value="ECO:0000315"/>
    <property type="project" value="UniProtKB"/>
</dbReference>
<dbReference type="FunFam" id="3.40.50.11660:FF:000001">
    <property type="entry name" value="alpha-(1,3)-fucosyltransferase 9"/>
    <property type="match status" value="1"/>
</dbReference>
<dbReference type="Gene3D" id="3.40.50.11660">
    <property type="entry name" value="Glycosyl transferase family 10, C-terminal domain"/>
    <property type="match status" value="1"/>
</dbReference>
<dbReference type="InterPro" id="IPR055270">
    <property type="entry name" value="Glyco_tran_10_C"/>
</dbReference>
<dbReference type="InterPro" id="IPR031481">
    <property type="entry name" value="Glyco_tran_10_N"/>
</dbReference>
<dbReference type="InterPro" id="IPR001503">
    <property type="entry name" value="Glyco_trans_10"/>
</dbReference>
<dbReference type="InterPro" id="IPR038577">
    <property type="entry name" value="GT10-like_C_sf"/>
</dbReference>
<dbReference type="PANTHER" id="PTHR11929:SF165">
    <property type="entry name" value="3-GALACTOSYL-N-ACETYLGLUCOSAMINIDE 4-ALPHA-L-FUCOSYLTRANSFERASE FUT3"/>
    <property type="match status" value="1"/>
</dbReference>
<dbReference type="PANTHER" id="PTHR11929">
    <property type="entry name" value="ALPHA- 1,3 -FUCOSYLTRANSFERASE"/>
    <property type="match status" value="1"/>
</dbReference>
<dbReference type="Pfam" id="PF17039">
    <property type="entry name" value="Glyco_tran_10_N"/>
    <property type="match status" value="1"/>
</dbReference>
<dbReference type="Pfam" id="PF00852">
    <property type="entry name" value="Glyco_transf_10"/>
    <property type="match status" value="1"/>
</dbReference>
<dbReference type="SUPFAM" id="SSF53756">
    <property type="entry name" value="UDP-Glycosyltransferase/glycogen phosphorylase"/>
    <property type="match status" value="1"/>
</dbReference>
<organism>
    <name type="scientific">Homo sapiens</name>
    <name type="common">Human</name>
    <dbReference type="NCBI Taxonomy" id="9606"/>
    <lineage>
        <taxon>Eukaryota</taxon>
        <taxon>Metazoa</taxon>
        <taxon>Chordata</taxon>
        <taxon>Craniata</taxon>
        <taxon>Vertebrata</taxon>
        <taxon>Euteleostomi</taxon>
        <taxon>Mammalia</taxon>
        <taxon>Eutheria</taxon>
        <taxon>Euarchontoglires</taxon>
        <taxon>Primates</taxon>
        <taxon>Haplorrhini</taxon>
        <taxon>Catarrhini</taxon>
        <taxon>Hominidae</taxon>
        <taxon>Homo</taxon>
    </lineage>
</organism>
<evidence type="ECO:0000255" key="1"/>
<evidence type="ECO:0000256" key="2">
    <source>
        <dbReference type="SAM" id="MobiDB-lite"/>
    </source>
</evidence>
<evidence type="ECO:0000269" key="3">
    <source>
    </source>
</evidence>
<evidence type="ECO:0000269" key="4">
    <source>
    </source>
</evidence>
<evidence type="ECO:0000269" key="5">
    <source>
    </source>
</evidence>
<evidence type="ECO:0000269" key="6">
    <source>
    </source>
</evidence>
<evidence type="ECO:0000269" key="7">
    <source>
    </source>
</evidence>
<evidence type="ECO:0000269" key="8">
    <source>
    </source>
</evidence>
<evidence type="ECO:0000269" key="9">
    <source>
    </source>
</evidence>
<evidence type="ECO:0000269" key="10">
    <source>
    </source>
</evidence>
<evidence type="ECO:0000269" key="11">
    <source>
    </source>
</evidence>
<evidence type="ECO:0000269" key="12">
    <source>
    </source>
</evidence>
<evidence type="ECO:0000269" key="13">
    <source>
    </source>
</evidence>
<evidence type="ECO:0000269" key="14">
    <source>
    </source>
</evidence>
<evidence type="ECO:0000269" key="15">
    <source>
    </source>
</evidence>
<evidence type="ECO:0000269" key="16">
    <source>
    </source>
</evidence>
<evidence type="ECO:0000269" key="17">
    <source>
    </source>
</evidence>
<evidence type="ECO:0000269" key="18">
    <source>
    </source>
</evidence>
<evidence type="ECO:0000269" key="19">
    <source>
    </source>
</evidence>
<evidence type="ECO:0000269" key="20">
    <source ref="4"/>
</evidence>
<evidence type="ECO:0000269" key="21">
    <source ref="5"/>
</evidence>
<evidence type="ECO:0000269" key="22">
    <source ref="6"/>
</evidence>
<evidence type="ECO:0000305" key="23"/>
<evidence type="ECO:0000305" key="24">
    <source>
    </source>
</evidence>
<evidence type="ECO:0000305" key="25">
    <source>
    </source>
</evidence>
<evidence type="ECO:0000305" key="26">
    <source>
    </source>
</evidence>
<evidence type="ECO:0000305" key="27">
    <source>
    </source>
</evidence>
<evidence type="ECO:0000305" key="28">
    <source>
    </source>
</evidence>
<evidence type="ECO:0000312" key="29">
    <source>
        <dbReference type="HGNC" id="HGNC:4014"/>
    </source>
</evidence>
<proteinExistence type="evidence at protein level"/>
<protein>
    <recommendedName>
        <fullName evidence="23">3-galactosyl-N-acetylglucosaminide 4-alpha-L-fucosyltransferase FUT3</fullName>
        <ecNumber evidence="7 11">2.4.1.65</ecNumber>
    </recommendedName>
    <alternativeName>
        <fullName>4-galactosyl-N-acetylglucosaminide 3-alpha-L-fucosyltransferase</fullName>
        <ecNumber evidence="9">2.4.1.152</ecNumber>
    </alternativeName>
    <alternativeName>
        <fullName evidence="23">Alpha-3-fucosyltransferase FUT3</fullName>
        <ecNumber evidence="7">2.4.1.-</ecNumber>
    </alternativeName>
    <alternativeName>
        <fullName>Blood group Lewis alpha-4-fucosyltransferase</fullName>
        <shortName>Lewis FT</shortName>
    </alternativeName>
    <alternativeName>
        <fullName>Fucosyltransferase 3</fullName>
    </alternativeName>
    <alternativeName>
        <fullName>Fucosyltransferase III</fullName>
        <shortName>FucT-III</shortName>
    </alternativeName>
</protein>
<gene>
    <name evidence="29" type="primary">FUT3</name>
    <name type="synonym">FT3B</name>
    <name type="synonym">LE</name>
</gene>
<sequence length="361" mass="42117">MDPLGAAKPQWPWRRCLAALLFQLLVAVCFFSYLRVSRDDATGSPRAPSGSSRQDTTPTRPTLLILLRTWPFHIPVALSRCSEMVPGTADCHITADRKVYPQADMVIVHHWDIMSNPKSRLPPSPRPQGQRWIWFNLEPPPNCQHLEALDRYFNLTMSYRSDSDIFTPYGWLEPWSGQPAHPPLNLSAKTELVAWAVSNWKPDSARVRYYQSLQAHLKVDVYGRSHKPLPKGTMMETLSRYKFYLAFENSLHPDYITEKLWRNALEAWAVPVVLGPSRSNYERFLPPDAFIHVDDFQSPKDLARYLQELDKDHARYLSYFRWRETLRPRSFSWALDFCKACWKLQQESRYQTVRSIAAWFT</sequence>
<keyword id="KW-0095">Blood group antigen</keyword>
<keyword id="KW-0325">Glycoprotein</keyword>
<keyword id="KW-0328">Glycosyltransferase</keyword>
<keyword id="KW-0333">Golgi apparatus</keyword>
<keyword id="KW-0443">Lipid metabolism</keyword>
<keyword id="KW-0472">Membrane</keyword>
<keyword id="KW-1267">Proteomics identification</keyword>
<keyword id="KW-1185">Reference proteome</keyword>
<keyword id="KW-0735">Signal-anchor</keyword>
<keyword id="KW-0808">Transferase</keyword>
<keyword id="KW-0812">Transmembrane</keyword>
<keyword id="KW-1133">Transmembrane helix</keyword>
<feature type="chain" id="PRO_0000221096" description="3-galactosyl-N-acetylglucosaminide 4-alpha-L-fucosyltransferase FUT3">
    <location>
        <begin position="1"/>
        <end position="361"/>
    </location>
</feature>
<feature type="topological domain" description="Cytoplasmic" evidence="1">
    <location>
        <begin position="1"/>
        <end position="15"/>
    </location>
</feature>
<feature type="transmembrane region" description="Helical; Signal-anchor for type II membrane protein" evidence="1 7">
    <location>
        <begin position="16"/>
        <end position="34"/>
    </location>
</feature>
<feature type="topological domain" description="Lumenal" evidence="1">
    <location>
        <begin position="35"/>
        <end position="361"/>
    </location>
</feature>
<feature type="region of interest" description="Disordered" evidence="2">
    <location>
        <begin position="39"/>
        <end position="58"/>
    </location>
</feature>
<feature type="glycosylation site" description="N-linked (GlcNAc...) asparagine" evidence="23">
    <location>
        <position position="154"/>
    </location>
</feature>
<feature type="glycosylation site" description="N-linked (GlcNAc...) asparagine" evidence="23">
    <location>
        <position position="185"/>
    </location>
</feature>
<feature type="sequence variant" id="VAR_022200" description="In dbSNP:rs28362458." evidence="22">
    <original>G</original>
    <variation>S</variation>
    <location>
        <position position="5"/>
    </location>
</feature>
<feature type="sequence variant" id="VAR_003426" description="In Le(-) individuals; dbSNP:rs28362459." evidence="13 14 16 17 22">
    <original>L</original>
    <variation>R</variation>
    <location>
        <position position="20"/>
    </location>
</feature>
<feature type="sequence variant" id="VAR_007959" description="In dbSNP:rs812936." evidence="6 7 10 16 20 22">
    <original>R</original>
    <variation>W</variation>
    <location>
        <position position="68"/>
    </location>
</feature>
<feature type="sequence variant" id="VAR_007960" description="In Le(+) individuals; dbSNP:rs59796499." evidence="19">
    <original>Q</original>
    <variation>K</variation>
    <location>
        <position position="102"/>
    </location>
</feature>
<feature type="sequence variant" id="VAR_003427" description="In dbSNP:rs778986." evidence="6 7 10 16 20 21 22">
    <original>M</original>
    <variation>T</variation>
    <location>
        <position position="105"/>
    </location>
</feature>
<feature type="sequence variant" id="VAR_007961" description="In Le(+) individuals; dbSNP:rs1175404919." evidence="19">
    <original>S</original>
    <variation>A</variation>
    <location>
        <position position="124"/>
    </location>
</feature>
<feature type="sequence variant" id="VAR_022201" description="In dbSNP:rs28362462." evidence="22">
    <original>R</original>
    <variation>C</variation>
    <location>
        <position position="160"/>
    </location>
</feature>
<feature type="sequence variant" id="VAR_007962" description="In Le(-) individuals; about 20% of alpha (1,3/1,4)fucosyltransferase activity; dbSNP:rs28362463." evidence="3 19 22">
    <original>D</original>
    <variation>N</variation>
    <location>
        <position position="162"/>
    </location>
</feature>
<feature type="sequence variant" id="VAR_003428" description="In Le(-) individuals; completely inactive; dbSNP:rs3745635." evidence="14 16 22">
    <original>G</original>
    <variation>S</variation>
    <location>
        <position position="170"/>
    </location>
</feature>
<feature type="sequence variant" id="VAR_007963" description="In Le(-) individuals; Loss of alpha (1,3/1,4)fucosyltransferase activity.; dbSNP:rs28362466." evidence="3 19 22">
    <original>G</original>
    <variation>R</variation>
    <location>
        <position position="223"/>
    </location>
</feature>
<feature type="sequence variant" id="VAR_007964" description="In Le(-) individuals; Loss of alpha (1,3/1,4)fucosyltransferase activity.; dbSNP:rs28381968." evidence="3 19 22">
    <original>V</original>
    <variation>M</variation>
    <location>
        <position position="270"/>
    </location>
</feature>
<feature type="sequence variant" id="VAR_022202" description="In dbSNP:rs28381969." evidence="22">
    <original>T</original>
    <variation>M</variation>
    <location>
        <position position="325"/>
    </location>
</feature>
<feature type="sequence variant" id="VAR_022203" description="In dbSNP:rs28381970." evidence="22">
    <original>R</original>
    <variation>Q</variation>
    <location>
        <position position="327"/>
    </location>
</feature>
<feature type="sequence variant" id="VAR_003429" description="In Le(-) individuals; dbSNP:rs151218854." evidence="16">
    <original>D</original>
    <variation>A</variation>
    <location>
        <position position="336"/>
    </location>
</feature>
<feature type="sequence variant" id="VAR_003430" description="In Le(-) individuals; less than 10% reduction in activity; dbSNP:rs3894326." evidence="12 13 17">
    <original>I</original>
    <variation>K</variation>
    <location>
        <position position="356"/>
    </location>
</feature>
<comment type="function">
    <text evidence="4 5 7 8 11">Catalyzes the transfer of L-fucose, from a guanosine diphosphate-beta-L-fucose, to both the subterminal N-acetyl glucosamine (GlcNAc) of type 1 chain (beta-D-Gal-(1-&gt;3)-beta-D-GlcNAc) glycolipids and oligosaccharides via an alpha(1,4) linkage, and the subterminal glucose (Glc) or GlcNAc of type 2 chain (beta-D-Gal-(1-&gt;4)-beta-D-GlcNAc) oligosaccharides via an alpha(1,3) linkage, independently of the presence of terminal alpha-L-fucosyl-(1,2) moieties on the terminal galactose of these acceptors (PubMed:11058871, PubMed:12668675, PubMed:1977660). Through its catalytic activity, participates in the synthesis of antigens of the Lewis blood group system, i.e. Lewis a (Le(a)), lewis b (Le(b)), Lewis x/SSEA-1 (Le(x)) and lewis y (Le(y)) antigens (PubMed:11058871, PubMed:12668675, PubMed:1977660). Also catalyzes the transfer of L-fucose to subterminal GlcNAc of sialyl- and disialyl-lactotetraosylceramide to produce sialyl Lewis a (sLe(a)) and disialyl Lewis a via an alpha(1,4) linkage and therefore may regulate cell surface sLe(a) expression and consequently regulates adhesive properties to E-selectin, cell proliferation and migration (PubMed:11058871, PubMed:12668675, PubMed:27453266). Catalyzes the transfer of an L-fucose to 3'-sialyl-N-acetyllactosamine by an alpha(1,3) linkage, which allows the formation of sialyl-Lewis x structure and therefore may regulate the sialyl-Lewis x surface antigen expression and consequently adhesive properties to E-selectin (PubMed:11058871, PubMed:29593094). Prefers type 1 chain over type 2 acceptors (PubMed:7721776). Type 1 tetrasaccharide is a better acceptor than type 1 disaccharide suggesting that a beta anomeric configuration of GlcNAc in the substrate is preferred (PubMed:7721776). Lewis-positive (Le(+)) individuals have an active enzyme while Lewis-negative (Le(-)) individuals have an inactive enzyme (PubMed:1977660).</text>
</comment>
<comment type="catalytic activity">
    <reaction evidence="7 11">
        <text>a beta-D-galactosyl-(1-&gt;3)-N-acetyl-beta-D-glucosaminyl derivative + GDP-beta-L-fucose = a beta-D-galactosyl-(1-&gt;3)-[alpha-L-fucosyl-(1-&gt;4)]-N-acetyl-beta-D-glucosaminyl derivative + GDP + H(+)</text>
        <dbReference type="Rhea" id="RHEA:23628"/>
        <dbReference type="ChEBI" id="CHEBI:15378"/>
        <dbReference type="ChEBI" id="CHEBI:57273"/>
        <dbReference type="ChEBI" id="CHEBI:58189"/>
        <dbReference type="ChEBI" id="CHEBI:133506"/>
        <dbReference type="ChEBI" id="CHEBI:140304"/>
        <dbReference type="EC" id="2.4.1.65"/>
    </reaction>
    <physiologicalReaction direction="left-to-right" evidence="26">
        <dbReference type="Rhea" id="RHEA:23629"/>
    </physiologicalReaction>
</comment>
<comment type="catalytic activity">
    <reaction evidence="9">
        <text>an N-acetyl-alpha-neuraminyl-(2-&gt;3)-beta-D-galactosyl-(1-&gt;4)-N-acetyl-beta-D-glucosaminyl derivative + GDP-beta-L-fucose = an alpha-Neu5Ac-(2-&gt;3)-beta-D-Gal-(1-&gt;4)-[alpha-L-Fuc-(1-&gt;3)]-beta-D-GlcNAc derivative + GDP + H(+)</text>
        <dbReference type="Rhea" id="RHEA:56076"/>
        <dbReference type="ChEBI" id="CHEBI:15378"/>
        <dbReference type="ChEBI" id="CHEBI:57273"/>
        <dbReference type="ChEBI" id="CHEBI:58189"/>
        <dbReference type="ChEBI" id="CHEBI:136545"/>
        <dbReference type="ChEBI" id="CHEBI:139509"/>
    </reaction>
    <physiologicalReaction direction="left-to-right" evidence="27">
        <dbReference type="Rhea" id="RHEA:56077"/>
    </physiologicalReaction>
</comment>
<comment type="catalytic activity">
    <reaction evidence="9">
        <text>a beta-D-galactosyl-(1-&gt;4)-N-acetyl-beta-D-glucosaminyl derivative + GDP-beta-L-fucose = a beta-D-galactosyl-(1-&gt;4)-[alpha-L-fucosyl-(1-&gt;3)]-N-acetyl-beta-D-glucosaminyl derivative + GDP + H(+)</text>
        <dbReference type="Rhea" id="RHEA:14257"/>
        <dbReference type="ChEBI" id="CHEBI:15378"/>
        <dbReference type="ChEBI" id="CHEBI:57273"/>
        <dbReference type="ChEBI" id="CHEBI:58189"/>
        <dbReference type="ChEBI" id="CHEBI:133507"/>
        <dbReference type="ChEBI" id="CHEBI:137941"/>
        <dbReference type="EC" id="2.4.1.152"/>
    </reaction>
    <physiologicalReaction direction="left-to-right" evidence="27">
        <dbReference type="Rhea" id="RHEA:14258"/>
    </physiologicalReaction>
</comment>
<comment type="catalytic activity">
    <reaction evidence="9">
        <text>an alpha-Neu5Ac-(2-&gt;3)-beta-D-Gal-(1-&gt;4)-beta-D-GlcNAc-(1-&gt;3)-beta-D-Gal-(1-&gt;4)-[alpha-L-Fuc-(1-&gt;3)]-beta-D-GlcNAc derivative + GDP-beta-L-fucose = an alpha-Neu5Ac-(2-&gt;3)-beta-D-Gal-(1-&gt;4)-[alpha-L-Fuc-(1-&gt;3)]-beta-D-GlcNAc-(1-&gt;3)-beta-D-Gal-(1-&gt;4)-[alpha-L-Fuc-(1-&gt;3)]-beta-D-GlcNAc derivative + GDP + H(+)</text>
        <dbReference type="Rhea" id="RHEA:52864"/>
        <dbReference type="ChEBI" id="CHEBI:15378"/>
        <dbReference type="ChEBI" id="CHEBI:57273"/>
        <dbReference type="ChEBI" id="CHEBI:58189"/>
        <dbReference type="ChEBI" id="CHEBI:145342"/>
        <dbReference type="ChEBI" id="CHEBI:145343"/>
    </reaction>
    <physiologicalReaction direction="left-to-right" evidence="27">
        <dbReference type="Rhea" id="RHEA:52865"/>
    </physiologicalReaction>
</comment>
<comment type="catalytic activity">
    <reaction evidence="11">
        <text>Lc4Cer + GDP-beta-L-fucose = a lactoside III(4)-a-Fuc-Lc4Cer + GDP + H(+)</text>
        <dbReference type="Rhea" id="RHEA:48824"/>
        <dbReference type="ChEBI" id="CHEBI:15378"/>
        <dbReference type="ChEBI" id="CHEBI:57273"/>
        <dbReference type="ChEBI" id="CHEBI:58189"/>
        <dbReference type="ChEBI" id="CHEBI:90800"/>
        <dbReference type="ChEBI" id="CHEBI:90811"/>
    </reaction>
    <physiologicalReaction direction="left-to-right" evidence="28">
        <dbReference type="Rhea" id="RHEA:48825"/>
    </physiologicalReaction>
</comment>
<comment type="catalytic activity">
    <reaction evidence="11">
        <text>a beta-D-Gal-(1-&gt;3)-beta-D-GlcNAc-(1-&gt;3)-beta-D-Gal-(1-&gt;4)-beta-D-Glc-(1&lt;-&gt;1')-Cer(d18:1(4E)) + GDP-beta-L-fucose = a III(4)-a-Fuc-Lc4Cer(d18:1(4E)) + GDP + H(+)</text>
        <dbReference type="Rhea" id="RHEA:48328"/>
        <dbReference type="ChEBI" id="CHEBI:15378"/>
        <dbReference type="ChEBI" id="CHEBI:17292"/>
        <dbReference type="ChEBI" id="CHEBI:57273"/>
        <dbReference type="ChEBI" id="CHEBI:58189"/>
        <dbReference type="ChEBI" id="CHEBI:90292"/>
    </reaction>
    <physiologicalReaction direction="left-to-right" evidence="28">
        <dbReference type="Rhea" id="RHEA:48329"/>
    </physiologicalReaction>
</comment>
<comment type="catalytic activity">
    <reaction evidence="5">
        <text>N-acetyl-alpha-neuraminosyl-(2-&gt;3)-beta-D-galactosyl-(1-&gt;3)-[N-acetyl-alpha-neuraminosyl-(2-&gt;6)]-N-acetyl-beta-D-glucosaminyl-(1-&gt;3)-beta-D-galactosyl-(1-&gt;4)-beta-D-glucosyl-(1&lt;-&gt;1')-N-acyl-sphing-4-enine + GDP-beta-L-fucose = N-acetyl-alpha-neuraminosyl-(2-&gt;3)-beta-D-galactosyl-(1-&gt;3)-alpha-L-fucosyl-(1-&gt;4)-[N-acetyl-alpha-neuraminosyl-(2-&gt;6)-N-acetyl-beta-D-glucosaminyl-(1-&gt;3)]-beta-D-galactosyl-(1-&gt;4)-beta-D-glucosyl-(1&lt;-&gt;1')-N-acyl-sphing-4-enine + GDP + H(+)</text>
        <dbReference type="Rhea" id="RHEA:47892"/>
        <dbReference type="ChEBI" id="CHEBI:15378"/>
        <dbReference type="ChEBI" id="CHEBI:57273"/>
        <dbReference type="ChEBI" id="CHEBI:58189"/>
        <dbReference type="ChEBI" id="CHEBI:88079"/>
        <dbReference type="ChEBI" id="CHEBI:88089"/>
    </reaction>
    <physiologicalReaction direction="left-to-right" evidence="25">
        <dbReference type="Rhea" id="RHEA:47893"/>
    </physiologicalReaction>
</comment>
<comment type="catalytic activity">
    <reaction evidence="5">
        <text>N-acetyl-alpha-neuraminosyl-(2-&gt;3)-beta-D-galactosyl-(1-&gt;3)-N-acetyl-beta-D-glucosaminyl-(1-&gt;3)-beta-D-galactosyl-(1-&gt;4)-beta-D-glucosyl-(1&lt;-&gt;1')-N-acyl-sphing-4-enine + GDP-beta-L-fucose = N-acetyl-alpha-neuraminosyl-(2-&gt;3)-beta-D-galactosyl-(1-&gt;3)-alpha-L-fucosyl-(1-&gt;4)-[N-acetyl-beta-D-glucosaminyl-(1-&gt;3)]-beta-D-galactosyl-(1-&gt;4)-beta-D-glucosyl-(1&lt;-&gt;1')-N-acyl-sphing-4-enine + GDP + H(+)</text>
        <dbReference type="Rhea" id="RHEA:47888"/>
        <dbReference type="ChEBI" id="CHEBI:15378"/>
        <dbReference type="ChEBI" id="CHEBI:57273"/>
        <dbReference type="ChEBI" id="CHEBI:58189"/>
        <dbReference type="ChEBI" id="CHEBI:88073"/>
        <dbReference type="ChEBI" id="CHEBI:88088"/>
    </reaction>
    <physiologicalReaction direction="left-to-right" evidence="25">
        <dbReference type="Rhea" id="RHEA:47889"/>
    </physiologicalReaction>
</comment>
<comment type="catalytic activity">
    <reaction evidence="7 11">
        <text>beta-D-galactosyl-(1-&gt;3)-N-acetyl-D-glucosamine + GDP-beta-L-fucose = beta-D-galactosyl-(1-&gt;3)-[alpha-L-fucosyl-(1-&gt;4)]-N-acetyl-D-glucosamine + GDP + H(+)</text>
        <dbReference type="Rhea" id="RHEA:62844"/>
        <dbReference type="ChEBI" id="CHEBI:15378"/>
        <dbReference type="ChEBI" id="CHEBI:27707"/>
        <dbReference type="ChEBI" id="CHEBI:57273"/>
        <dbReference type="ChEBI" id="CHEBI:58189"/>
        <dbReference type="ChEBI" id="CHEBI:62265"/>
    </reaction>
    <physiologicalReaction direction="left-to-right" evidence="28">
        <dbReference type="Rhea" id="RHEA:62845"/>
    </physiologicalReaction>
</comment>
<comment type="catalytic activity">
    <reaction evidence="7">
        <text>alpha-L-Fuc-(1-&gt;2)-beta-D-Gal-(1-&gt;3)-D-GlcNAc + GDP-beta-L-fucose = alpha-L-Fuc-(1-&gt;2)-beta-D-Gal-(1-&gt;3)-[alpha-L-Fuc-(1-&gt;4)]-D-GlcNAc + GDP + H(+)</text>
        <dbReference type="Rhea" id="RHEA:62896"/>
        <dbReference type="ChEBI" id="CHEBI:15378"/>
        <dbReference type="ChEBI" id="CHEBI:57273"/>
        <dbReference type="ChEBI" id="CHEBI:58189"/>
        <dbReference type="ChEBI" id="CHEBI:59440"/>
        <dbReference type="ChEBI" id="CHEBI:62259"/>
    </reaction>
    <physiologicalReaction direction="left-to-right" evidence="26">
        <dbReference type="Rhea" id="RHEA:62897"/>
    </physiologicalReaction>
</comment>
<comment type="catalytic activity">
    <reaction evidence="7">
        <text>alpha-L-Fuc-(1-&gt;2)-beta-D-Gal-(1-&gt;4)-D-GlcNAc + GDP-beta-L-fucose = alpha-L-Fuc-(1-&gt;2)-beta-D-Gal-(1-&gt;4)-[alpha-L-Fuc-(1-&gt;3)]-D-GlcNAc + GDP + H(+)</text>
        <dbReference type="Rhea" id="RHEA:62900"/>
        <dbReference type="ChEBI" id="CHEBI:15378"/>
        <dbReference type="ChEBI" id="CHEBI:57273"/>
        <dbReference type="ChEBI" id="CHEBI:58189"/>
        <dbReference type="ChEBI" id="CHEBI:62263"/>
        <dbReference type="ChEBI" id="CHEBI:62507"/>
    </reaction>
    <physiologicalReaction direction="left-to-right" evidence="26">
        <dbReference type="Rhea" id="RHEA:62901"/>
    </physiologicalReaction>
</comment>
<comment type="catalytic activity">
    <reaction evidence="7">
        <text>beta-D-galactosyl-(1-&gt;4)-N-acetyl-D-glucosamine + GDP-beta-L-fucose = beta-D-galactosyl-(1-&gt;4)-[alpha-L-fucosyl-(1-&gt;3)]-N-acetyl-D-glucosamine + GDP + H(+)</text>
        <dbReference type="Rhea" id="RHEA:62824"/>
        <dbReference type="ChEBI" id="CHEBI:15378"/>
        <dbReference type="ChEBI" id="CHEBI:57273"/>
        <dbReference type="ChEBI" id="CHEBI:58189"/>
        <dbReference type="ChEBI" id="CHEBI:60152"/>
        <dbReference type="ChEBI" id="CHEBI:62287"/>
    </reaction>
    <physiologicalReaction direction="left-to-right" evidence="26">
        <dbReference type="Rhea" id="RHEA:62825"/>
    </physiologicalReaction>
</comment>
<comment type="catalytic activity">
    <reaction evidence="7">
        <text>lactose + GDP-beta-L-fucose = beta-D-galactosyl-(1-&gt;4)-[alpha-L-fucosyl-(1-&gt;3)]-D-glucose + GDP + H(+)</text>
        <dbReference type="Rhea" id="RHEA:62888"/>
        <dbReference type="ChEBI" id="CHEBI:15378"/>
        <dbReference type="ChEBI" id="CHEBI:17716"/>
        <dbReference type="ChEBI" id="CHEBI:57273"/>
        <dbReference type="ChEBI" id="CHEBI:58189"/>
        <dbReference type="ChEBI" id="CHEBI:90065"/>
    </reaction>
    <physiologicalReaction direction="left-to-right" evidence="26">
        <dbReference type="Rhea" id="RHEA:62889"/>
    </physiologicalReaction>
</comment>
<comment type="catalytic activity">
    <reaction evidence="4">
        <text>an alpha-Neu5Ac-(2-&gt;3)-beta-D-Gal-(1-&gt;3)-D-GlcNAc derivative + GDP-beta-L-fucose = an alpha-Neu5Ac-(2-&gt;3)-beta-D-Gal-(1-&gt;3)-[alpha-L-Fuc-(1-&gt;4)]-beta-D-GlcNAc derivative + GDP + H(+)</text>
        <dbReference type="Rhea" id="RHEA:62904"/>
        <dbReference type="ChEBI" id="CHEBI:15378"/>
        <dbReference type="ChEBI" id="CHEBI:57273"/>
        <dbReference type="ChEBI" id="CHEBI:58189"/>
        <dbReference type="ChEBI" id="CHEBI:146021"/>
        <dbReference type="ChEBI" id="CHEBI:146022"/>
    </reaction>
    <physiologicalReaction direction="left-to-right" evidence="24">
        <dbReference type="Rhea" id="RHEA:62905"/>
    </physiologicalReaction>
</comment>
<comment type="biophysicochemical properties">
    <kinetics>
        <KM evidence="11">1 mM for beta-D-Gal-(1-&gt;3)-beta-D-GlcNAc-O-CH(2)(8)-COOCH(3)</KM>
        <KM evidence="11">0.1 mM for fucalpha1-&gt;2Galbeta1-&gt;3GlcNAcbeta-O-CH(2)(8)-COOCH(3)</KM>
        <KM evidence="11">0.58 mM for NeuAca2-&gt;3GAlb1-&gt;3GlcNAcB-O-CH(2)(8)-COOCH(3)</KM>
    </kinetics>
</comment>
<comment type="pathway">
    <text evidence="7 9">Protein modification; protein glycosylation.</text>
</comment>
<comment type="interaction">
    <interactant intactId="EBI-12839380">
        <id>P21217</id>
    </interactant>
    <interactant intactId="EBI-12955347">
        <id>P58499</id>
        <label>FAM3B</label>
    </interactant>
    <organismsDiffer>false</organismsDiffer>
    <experiments>4</experiments>
</comment>
<comment type="interaction">
    <interactant intactId="EBI-12839380">
        <id>P21217</id>
    </interactant>
    <interactant intactId="EBI-8652744">
        <id>Q96IW7</id>
        <label>SEC22A</label>
    </interactant>
    <organismsDiffer>false</organismsDiffer>
    <experiments>3</experiments>
</comment>
<comment type="interaction">
    <interactant intactId="EBI-12839380">
        <id>P21217</id>
    </interactant>
    <interactant intactId="EBI-10290130">
        <id>Q96JW4</id>
        <label>SLC41A2</label>
    </interactant>
    <organismsDiffer>false</organismsDiffer>
    <experiments>3</experiments>
</comment>
<comment type="interaction">
    <interactant intactId="EBI-12839380">
        <id>P21217</id>
    </interactant>
    <interactant intactId="EBI-10243654">
        <id>Q5BVD1</id>
        <label>TTMP</label>
    </interactant>
    <organismsDiffer>false</organismsDiffer>
    <experiments>3</experiments>
</comment>
<comment type="interaction">
    <interactant intactId="EBI-12839380">
        <id>P21217</id>
    </interactant>
    <interactant intactId="EBI-11988865">
        <id>A5PKU2</id>
        <label>TUSC5</label>
    </interactant>
    <organismsDiffer>false</organismsDiffer>
    <experiments>3</experiments>
</comment>
<comment type="subcellular location">
    <subcellularLocation>
        <location>Golgi apparatus</location>
        <location>Golgi stack membrane</location>
        <topology evidence="7">Single-pass type II membrane protein</topology>
    </subcellularLocation>
    <text>Membrane-bound form in trans cisternae of Golgi.</text>
</comment>
<comment type="tissue specificity">
    <text evidence="10">Highly expressed in stomach, colon, small intestine, lung and kidney and to a lesser extent in salivary gland, bladder, uterus and liver.</text>
</comment>
<comment type="PTM">
    <text evidence="11">Glycosylated.</text>
</comment>
<comment type="polymorphism">
    <text evidence="3 12 15 16 17 18">Genetic variations in FUT3 define the Lewis blood group system (LE) [MIM:618983]. FUT3 catalyzes the addition of fucose to precursor polysaccharides in the last step of Lewis antigen biosynthesis. Variations in this gene are responsible for the majority of Lewis antigen-negative phenotypes (Le(-)).</text>
</comment>
<comment type="similarity">
    <text evidence="23">Belongs to the glycosyltransferase 10 family.</text>
</comment>
<comment type="online information" name="Functional Glycomics Gateway - GTase">
    <link uri="http://www.functionalglycomics.org/glycomics/molecule/jsp/glycoEnzyme/viewGlycoEnzyme.jsp?gbpId=gt_hum_600"/>
    <text>Fucosyltransferase 3</text>
</comment>